<organism>
    <name type="scientific">Archaeoglobus fulgidus (strain ATCC 49558 / DSM 4304 / JCM 9628 / NBRC 100126 / VC-16)</name>
    <dbReference type="NCBI Taxonomy" id="224325"/>
    <lineage>
        <taxon>Archaea</taxon>
        <taxon>Methanobacteriati</taxon>
        <taxon>Methanobacteriota</taxon>
        <taxon>Archaeoglobi</taxon>
        <taxon>Archaeoglobales</taxon>
        <taxon>Archaeoglobaceae</taxon>
        <taxon>Archaeoglobus</taxon>
    </lineage>
</organism>
<gene>
    <name type="primary">dsrD</name>
    <name type="ordered locus">AF_0425</name>
</gene>
<reference key="1">
    <citation type="journal article" date="1993" name="J. Gen. Microbiol.">
        <title>Dissimilatory sulphite reductase from Archaeoglobus fulgidus: physico-chemical properties of the enzyme and cloning, sequencing and analysis of the reductase genes.</title>
        <authorList>
            <person name="Dahl C."/>
            <person name="Kredich N.M."/>
            <person name="Deutzmann R."/>
            <person name="Trueper H.G."/>
        </authorList>
    </citation>
    <scope>NUCLEOTIDE SEQUENCE [GENOMIC DNA]</scope>
    <source>
        <strain>ATCC 49558 / DSM 4304 / JCM 9628 / NBRC 100126 / VC-16</strain>
    </source>
</reference>
<reference key="2">
    <citation type="journal article" date="1997" name="Nature">
        <title>The complete genome sequence of the hyperthermophilic, sulphate-reducing archaeon Archaeoglobus fulgidus.</title>
        <authorList>
            <person name="Klenk H.-P."/>
            <person name="Clayton R.A."/>
            <person name="Tomb J.-F."/>
            <person name="White O."/>
            <person name="Nelson K.E."/>
            <person name="Ketchum K.A."/>
            <person name="Dodson R.J."/>
            <person name="Gwinn M.L."/>
            <person name="Hickey E.K."/>
            <person name="Peterson J.D."/>
            <person name="Richardson D.L."/>
            <person name="Kerlavage A.R."/>
            <person name="Graham D.E."/>
            <person name="Kyrpides N.C."/>
            <person name="Fleischmann R.D."/>
            <person name="Quackenbush J."/>
            <person name="Lee N.H."/>
            <person name="Sutton G.G."/>
            <person name="Gill S.R."/>
            <person name="Kirkness E.F."/>
            <person name="Dougherty B.A."/>
            <person name="McKenney K."/>
            <person name="Adams M.D."/>
            <person name="Loftus B.J."/>
            <person name="Peterson S.N."/>
            <person name="Reich C.I."/>
            <person name="McNeil L.K."/>
            <person name="Badger J.H."/>
            <person name="Glodek A."/>
            <person name="Zhou L."/>
            <person name="Overbeek R."/>
            <person name="Gocayne J.D."/>
            <person name="Weidman J.F."/>
            <person name="McDonald L.A."/>
            <person name="Utterback T.R."/>
            <person name="Cotton M.D."/>
            <person name="Spriggs T."/>
            <person name="Artiach P."/>
            <person name="Kaine B.P."/>
            <person name="Sykes S.M."/>
            <person name="Sadow P.W."/>
            <person name="D'Andrea K.P."/>
            <person name="Bowman C."/>
            <person name="Fujii C."/>
            <person name="Garland S.A."/>
            <person name="Mason T.M."/>
            <person name="Olsen G.J."/>
            <person name="Fraser C.M."/>
            <person name="Smith H.O."/>
            <person name="Woese C.R."/>
            <person name="Venter J.C."/>
        </authorList>
    </citation>
    <scope>NUCLEOTIDE SEQUENCE [LARGE SCALE GENOMIC DNA]</scope>
    <source>
        <strain>ATCC 49558 / DSM 4304 / JCM 9628 / NBRC 100126 / VC-16</strain>
    </source>
</reference>
<reference key="3">
    <citation type="journal article" date="1995" name="Appl. Environ. Microbiol.">
        <title>Conservation of the genes for dissimilatory sulfite reductase from Desulfovibrio vulgaris and Archaeoglobus fulgidus allows their detection by PCR.</title>
        <authorList>
            <person name="Karkhoff-Schweizer R.R."/>
            <person name="Huber D.P.W."/>
            <person name="Voordouw G."/>
        </authorList>
    </citation>
    <scope>IDENTIFICATION</scope>
</reference>
<comment type="function">
    <text>May play an essential role in dissimilatory sulfite reduction.</text>
</comment>
<comment type="similarity">
    <text evidence="1">To D.vulgaris DsvD.</text>
</comment>
<keyword id="KW-1185">Reference proteome</keyword>
<accession>P70742</accession>
<accession>O29824</accession>
<protein>
    <recommendedName>
        <fullName>Protein DsrD</fullName>
    </recommendedName>
</protein>
<dbReference type="EMBL" id="M95624">
    <property type="protein sequence ID" value="AAB17215.1"/>
    <property type="molecule type" value="Genomic_DNA"/>
</dbReference>
<dbReference type="EMBL" id="AE000782">
    <property type="protein sequence ID" value="AAB90817.1"/>
    <property type="molecule type" value="Genomic_DNA"/>
</dbReference>
<dbReference type="PIR" id="A69303">
    <property type="entry name" value="A69303"/>
</dbReference>
<dbReference type="RefSeq" id="WP_010877932.1">
    <property type="nucleotide sequence ID" value="NC_000917.1"/>
</dbReference>
<dbReference type="SMR" id="P70742"/>
<dbReference type="STRING" id="224325.AF_0425"/>
<dbReference type="PaxDb" id="224325-AF_0425"/>
<dbReference type="EnsemblBacteria" id="AAB90817">
    <property type="protein sequence ID" value="AAB90817"/>
    <property type="gene ID" value="AF_0425"/>
</dbReference>
<dbReference type="KEGG" id="afu:AF_0425"/>
<dbReference type="eggNOG" id="arCOG10384">
    <property type="taxonomic scope" value="Archaea"/>
</dbReference>
<dbReference type="HOGENOM" id="CLU_2613403_0_0_2"/>
<dbReference type="OrthoDB" id="50288at2157"/>
<dbReference type="Proteomes" id="UP000002199">
    <property type="component" value="Chromosome"/>
</dbReference>
<dbReference type="Gene3D" id="1.10.10.10">
    <property type="entry name" value="Winged helix-like DNA-binding domain superfamily/Winged helix DNA-binding domain"/>
    <property type="match status" value="1"/>
</dbReference>
<dbReference type="InterPro" id="IPR014793">
    <property type="entry name" value="DsrD"/>
</dbReference>
<dbReference type="InterPro" id="IPR036388">
    <property type="entry name" value="WH-like_DNA-bd_sf"/>
</dbReference>
<dbReference type="InterPro" id="IPR036390">
    <property type="entry name" value="WH_DNA-bd_sf"/>
</dbReference>
<dbReference type="Pfam" id="PF08679">
    <property type="entry name" value="DsrD"/>
    <property type="match status" value="1"/>
</dbReference>
<dbReference type="SUPFAM" id="SSF46785">
    <property type="entry name" value="Winged helix' DNA-binding domain"/>
    <property type="match status" value="1"/>
</dbReference>
<feature type="chain" id="PRO_0000080028" description="Protein DsrD">
    <location>
        <begin position="1"/>
        <end position="77"/>
    </location>
</feature>
<feature type="sequence conflict" description="In Ref. 1; AAB17215." evidence="1" ref="1">
    <original>QL</original>
    <variation>HV</variation>
    <location>
        <begin position="15"/>
        <end position="16"/>
    </location>
</feature>
<sequence>MADYTEEDKQKVLAQLSKKTWKIPELAKILKMDKKVVKKIVQDLINEGVAGYWSSGSTTYVATKEYIEELEKKRAEG</sequence>
<evidence type="ECO:0000305" key="1"/>
<proteinExistence type="predicted"/>
<name>DSRD_ARCFU</name>